<proteinExistence type="inferred from homology"/>
<accession>Q0ANR8</accession>
<name>RL30_MARMM</name>
<sequence length="61" mass="6857">MAKKTIRVRQTGSAIRRPKDQRATLVGLGLNKIGRERELEDTPSVRGMIAKVSHMVEIVEE</sequence>
<comment type="subunit">
    <text evidence="1">Part of the 50S ribosomal subunit.</text>
</comment>
<comment type="similarity">
    <text evidence="1">Belongs to the universal ribosomal protein uL30 family.</text>
</comment>
<organism>
    <name type="scientific">Maricaulis maris (strain MCS10)</name>
    <name type="common">Caulobacter maris</name>
    <dbReference type="NCBI Taxonomy" id="394221"/>
    <lineage>
        <taxon>Bacteria</taxon>
        <taxon>Pseudomonadati</taxon>
        <taxon>Pseudomonadota</taxon>
        <taxon>Alphaproteobacteria</taxon>
        <taxon>Maricaulales</taxon>
        <taxon>Maricaulaceae</taxon>
        <taxon>Maricaulis</taxon>
    </lineage>
</organism>
<gene>
    <name evidence="1" type="primary">rpmD</name>
    <name type="ordered locus">Mmar10_1777</name>
</gene>
<feature type="chain" id="PRO_0000273806" description="Large ribosomal subunit protein uL30">
    <location>
        <begin position="1"/>
        <end position="61"/>
    </location>
</feature>
<keyword id="KW-1185">Reference proteome</keyword>
<keyword id="KW-0687">Ribonucleoprotein</keyword>
<keyword id="KW-0689">Ribosomal protein</keyword>
<protein>
    <recommendedName>
        <fullName evidence="1">Large ribosomal subunit protein uL30</fullName>
    </recommendedName>
    <alternativeName>
        <fullName evidence="2">50S ribosomal protein L30</fullName>
    </alternativeName>
</protein>
<evidence type="ECO:0000255" key="1">
    <source>
        <dbReference type="HAMAP-Rule" id="MF_01371"/>
    </source>
</evidence>
<evidence type="ECO:0000305" key="2"/>
<dbReference type="EMBL" id="CP000449">
    <property type="protein sequence ID" value="ABI66069.1"/>
    <property type="molecule type" value="Genomic_DNA"/>
</dbReference>
<dbReference type="RefSeq" id="WP_011643715.1">
    <property type="nucleotide sequence ID" value="NC_008347.1"/>
</dbReference>
<dbReference type="SMR" id="Q0ANR8"/>
<dbReference type="STRING" id="394221.Mmar10_1777"/>
<dbReference type="KEGG" id="mmr:Mmar10_1777"/>
<dbReference type="eggNOG" id="COG1841">
    <property type="taxonomic scope" value="Bacteria"/>
</dbReference>
<dbReference type="HOGENOM" id="CLU_131047_1_2_5"/>
<dbReference type="OrthoDB" id="9812790at2"/>
<dbReference type="Proteomes" id="UP000001964">
    <property type="component" value="Chromosome"/>
</dbReference>
<dbReference type="GO" id="GO:0022625">
    <property type="term" value="C:cytosolic large ribosomal subunit"/>
    <property type="evidence" value="ECO:0007669"/>
    <property type="project" value="TreeGrafter"/>
</dbReference>
<dbReference type="GO" id="GO:0003735">
    <property type="term" value="F:structural constituent of ribosome"/>
    <property type="evidence" value="ECO:0007669"/>
    <property type="project" value="InterPro"/>
</dbReference>
<dbReference type="GO" id="GO:0006412">
    <property type="term" value="P:translation"/>
    <property type="evidence" value="ECO:0007669"/>
    <property type="project" value="UniProtKB-UniRule"/>
</dbReference>
<dbReference type="CDD" id="cd01658">
    <property type="entry name" value="Ribosomal_L30"/>
    <property type="match status" value="1"/>
</dbReference>
<dbReference type="Gene3D" id="3.30.1390.20">
    <property type="entry name" value="Ribosomal protein L30, ferredoxin-like fold domain"/>
    <property type="match status" value="1"/>
</dbReference>
<dbReference type="HAMAP" id="MF_01371_B">
    <property type="entry name" value="Ribosomal_uL30_B"/>
    <property type="match status" value="1"/>
</dbReference>
<dbReference type="InterPro" id="IPR036919">
    <property type="entry name" value="Ribo_uL30_ferredoxin-like_sf"/>
</dbReference>
<dbReference type="InterPro" id="IPR005996">
    <property type="entry name" value="Ribosomal_uL30_bac-type"/>
</dbReference>
<dbReference type="InterPro" id="IPR016082">
    <property type="entry name" value="Ribosomal_uL30_ferredoxin-like"/>
</dbReference>
<dbReference type="NCBIfam" id="TIGR01308">
    <property type="entry name" value="rpmD_bact"/>
    <property type="match status" value="1"/>
</dbReference>
<dbReference type="PANTHER" id="PTHR15892:SF2">
    <property type="entry name" value="LARGE RIBOSOMAL SUBUNIT PROTEIN UL30M"/>
    <property type="match status" value="1"/>
</dbReference>
<dbReference type="PANTHER" id="PTHR15892">
    <property type="entry name" value="MITOCHONDRIAL RIBOSOMAL PROTEIN L30"/>
    <property type="match status" value="1"/>
</dbReference>
<dbReference type="Pfam" id="PF00327">
    <property type="entry name" value="Ribosomal_L30"/>
    <property type="match status" value="1"/>
</dbReference>
<dbReference type="PIRSF" id="PIRSF002211">
    <property type="entry name" value="Ribosomal_L30_bac-type"/>
    <property type="match status" value="1"/>
</dbReference>
<dbReference type="SUPFAM" id="SSF55129">
    <property type="entry name" value="Ribosomal protein L30p/L7e"/>
    <property type="match status" value="1"/>
</dbReference>
<reference key="1">
    <citation type="submission" date="2006-08" db="EMBL/GenBank/DDBJ databases">
        <title>Complete sequence of Maricaulis maris MCS10.</title>
        <authorList>
            <consortium name="US DOE Joint Genome Institute"/>
            <person name="Copeland A."/>
            <person name="Lucas S."/>
            <person name="Lapidus A."/>
            <person name="Barry K."/>
            <person name="Detter J.C."/>
            <person name="Glavina del Rio T."/>
            <person name="Hammon N."/>
            <person name="Israni S."/>
            <person name="Dalin E."/>
            <person name="Tice H."/>
            <person name="Pitluck S."/>
            <person name="Saunders E."/>
            <person name="Brettin T."/>
            <person name="Bruce D."/>
            <person name="Han C."/>
            <person name="Tapia R."/>
            <person name="Gilna P."/>
            <person name="Schmutz J."/>
            <person name="Larimer F."/>
            <person name="Land M."/>
            <person name="Hauser L."/>
            <person name="Kyrpides N."/>
            <person name="Mikhailova N."/>
            <person name="Viollier P."/>
            <person name="Stephens C."/>
            <person name="Richardson P."/>
        </authorList>
    </citation>
    <scope>NUCLEOTIDE SEQUENCE [LARGE SCALE GENOMIC DNA]</scope>
    <source>
        <strain>MCS10</strain>
    </source>
</reference>